<accession>C0RGR3</accession>
<keyword id="KW-0963">Cytoplasm</keyword>
<keyword id="KW-0704">Schiff base</keyword>
<keyword id="KW-0784">Thiamine biosynthesis</keyword>
<keyword id="KW-0808">Transferase</keyword>
<gene>
    <name evidence="1" type="primary">thiG</name>
    <name type="ordered locus">BMEA_A0222</name>
</gene>
<evidence type="ECO:0000255" key="1">
    <source>
        <dbReference type="HAMAP-Rule" id="MF_00443"/>
    </source>
</evidence>
<comment type="function">
    <text evidence="1">Catalyzes the rearrangement of 1-deoxy-D-xylulose 5-phosphate (DXP) to produce the thiazole phosphate moiety of thiamine. Sulfur is provided by the thiocarboxylate moiety of the carrier protein ThiS. In vitro, sulfur can be provided by H(2)S.</text>
</comment>
<comment type="catalytic activity">
    <reaction evidence="1">
        <text>[ThiS sulfur-carrier protein]-C-terminal-Gly-aminoethanethioate + 2-iminoacetate + 1-deoxy-D-xylulose 5-phosphate = [ThiS sulfur-carrier protein]-C-terminal Gly-Gly + 2-[(2R,5Z)-2-carboxy-4-methylthiazol-5(2H)-ylidene]ethyl phosphate + 2 H2O + H(+)</text>
        <dbReference type="Rhea" id="RHEA:26297"/>
        <dbReference type="Rhea" id="RHEA-COMP:12909"/>
        <dbReference type="Rhea" id="RHEA-COMP:19908"/>
        <dbReference type="ChEBI" id="CHEBI:15377"/>
        <dbReference type="ChEBI" id="CHEBI:15378"/>
        <dbReference type="ChEBI" id="CHEBI:57792"/>
        <dbReference type="ChEBI" id="CHEBI:62899"/>
        <dbReference type="ChEBI" id="CHEBI:77846"/>
        <dbReference type="ChEBI" id="CHEBI:90778"/>
        <dbReference type="ChEBI" id="CHEBI:232372"/>
        <dbReference type="EC" id="2.8.1.10"/>
    </reaction>
</comment>
<comment type="pathway">
    <text evidence="1">Cofactor biosynthesis; thiamine diphosphate biosynthesis.</text>
</comment>
<comment type="subunit">
    <text evidence="1">Homotetramer. Forms heterodimers with either ThiH or ThiS.</text>
</comment>
<comment type="subcellular location">
    <subcellularLocation>
        <location evidence="1">Cytoplasm</location>
    </subcellularLocation>
</comment>
<comment type="similarity">
    <text evidence="1">Belongs to the ThiG family.</text>
</comment>
<feature type="chain" id="PRO_1000196840" description="Thiazole synthase">
    <location>
        <begin position="1"/>
        <end position="256"/>
    </location>
</feature>
<feature type="active site" description="Schiff-base intermediate with DXP" evidence="1">
    <location>
        <position position="96"/>
    </location>
</feature>
<feature type="binding site" evidence="1">
    <location>
        <position position="157"/>
    </location>
    <ligand>
        <name>1-deoxy-D-xylulose 5-phosphate</name>
        <dbReference type="ChEBI" id="CHEBI:57792"/>
    </ligand>
</feature>
<feature type="binding site" evidence="1">
    <location>
        <begin position="184"/>
        <end position="185"/>
    </location>
    <ligand>
        <name>1-deoxy-D-xylulose 5-phosphate</name>
        <dbReference type="ChEBI" id="CHEBI:57792"/>
    </ligand>
</feature>
<feature type="binding site" evidence="1">
    <location>
        <begin position="206"/>
        <end position="207"/>
    </location>
    <ligand>
        <name>1-deoxy-D-xylulose 5-phosphate</name>
        <dbReference type="ChEBI" id="CHEBI:57792"/>
    </ligand>
</feature>
<name>THIG_BRUMB</name>
<proteinExistence type="inferred from homology"/>
<reference key="1">
    <citation type="submission" date="2009-03" db="EMBL/GenBank/DDBJ databases">
        <title>Brucella melitensis ATCC 23457 whole genome shotgun sequencing project.</title>
        <authorList>
            <person name="Setubal J.C."/>
            <person name="Boyle S."/>
            <person name="Crasta O.R."/>
            <person name="Gillespie J.J."/>
            <person name="Kenyon R.W."/>
            <person name="Lu J."/>
            <person name="Mane S."/>
            <person name="Nagrani S."/>
            <person name="Shallom J.M."/>
            <person name="Shallom S."/>
            <person name="Shukla M."/>
            <person name="Snyder E.E."/>
            <person name="Sobral B.W."/>
            <person name="Wattam A.R."/>
            <person name="Will R."/>
            <person name="Williams K."/>
            <person name="Yoo H."/>
            <person name="Munk C."/>
            <person name="Tapia R."/>
            <person name="Han C."/>
            <person name="Detter J.C."/>
            <person name="Bruce D."/>
            <person name="Brettin T.S."/>
        </authorList>
    </citation>
    <scope>NUCLEOTIDE SEQUENCE [LARGE SCALE GENOMIC DNA]</scope>
    <source>
        <strain>ATCC 23457</strain>
    </source>
</reference>
<organism>
    <name type="scientific">Brucella melitensis biotype 2 (strain ATCC 23457)</name>
    <dbReference type="NCBI Taxonomy" id="546272"/>
    <lineage>
        <taxon>Bacteria</taxon>
        <taxon>Pseudomonadati</taxon>
        <taxon>Pseudomonadota</taxon>
        <taxon>Alphaproteobacteria</taxon>
        <taxon>Hyphomicrobiales</taxon>
        <taxon>Brucellaceae</taxon>
        <taxon>Brucella/Ochrobactrum group</taxon>
        <taxon>Brucella</taxon>
    </lineage>
</organism>
<protein>
    <recommendedName>
        <fullName evidence="1">Thiazole synthase</fullName>
        <ecNumber evidence="1">2.8.1.10</ecNumber>
    </recommendedName>
</protein>
<dbReference type="EC" id="2.8.1.10" evidence="1"/>
<dbReference type="EMBL" id="CP001488">
    <property type="protein sequence ID" value="ACO00021.1"/>
    <property type="molecule type" value="Genomic_DNA"/>
</dbReference>
<dbReference type="RefSeq" id="WP_004684703.1">
    <property type="nucleotide sequence ID" value="NC_012441.1"/>
</dbReference>
<dbReference type="SMR" id="C0RGR3"/>
<dbReference type="KEGG" id="bmi:BMEA_A0222"/>
<dbReference type="HOGENOM" id="CLU_062233_1_0_5"/>
<dbReference type="UniPathway" id="UPA00060"/>
<dbReference type="Proteomes" id="UP000001748">
    <property type="component" value="Chromosome I"/>
</dbReference>
<dbReference type="GO" id="GO:0005737">
    <property type="term" value="C:cytoplasm"/>
    <property type="evidence" value="ECO:0007669"/>
    <property type="project" value="UniProtKB-SubCell"/>
</dbReference>
<dbReference type="GO" id="GO:1990107">
    <property type="term" value="F:thiazole synthase activity"/>
    <property type="evidence" value="ECO:0007669"/>
    <property type="project" value="UniProtKB-EC"/>
</dbReference>
<dbReference type="GO" id="GO:0009229">
    <property type="term" value="P:thiamine diphosphate biosynthetic process"/>
    <property type="evidence" value="ECO:0007669"/>
    <property type="project" value="UniProtKB-UniRule"/>
</dbReference>
<dbReference type="CDD" id="cd04728">
    <property type="entry name" value="ThiG"/>
    <property type="match status" value="1"/>
</dbReference>
<dbReference type="Gene3D" id="3.20.20.70">
    <property type="entry name" value="Aldolase class I"/>
    <property type="match status" value="1"/>
</dbReference>
<dbReference type="HAMAP" id="MF_00443">
    <property type="entry name" value="ThiG"/>
    <property type="match status" value="1"/>
</dbReference>
<dbReference type="InterPro" id="IPR013785">
    <property type="entry name" value="Aldolase_TIM"/>
</dbReference>
<dbReference type="InterPro" id="IPR033983">
    <property type="entry name" value="Thiazole_synthase_ThiG"/>
</dbReference>
<dbReference type="InterPro" id="IPR008867">
    <property type="entry name" value="ThiG"/>
</dbReference>
<dbReference type="PANTHER" id="PTHR34266">
    <property type="entry name" value="THIAZOLE SYNTHASE"/>
    <property type="match status" value="1"/>
</dbReference>
<dbReference type="PANTHER" id="PTHR34266:SF2">
    <property type="entry name" value="THIAZOLE SYNTHASE"/>
    <property type="match status" value="1"/>
</dbReference>
<dbReference type="Pfam" id="PF05690">
    <property type="entry name" value="ThiG"/>
    <property type="match status" value="1"/>
</dbReference>
<dbReference type="SUPFAM" id="SSF110399">
    <property type="entry name" value="ThiG-like"/>
    <property type="match status" value="1"/>
</dbReference>
<sequence>MLEFYGKRFESRLLLGTAQYPSPSILADAVRASLSRIVTVSLRRESGEARAGQDFWALIKALGVAVLPNTAGCHTPREAITTAHMAREVFGTNWIKLEVIGDTDTLQPDPFGLVEAARILCDEGFEVFPYMNDDLIVAERLIEAGCKVLMPWGAPIGSGRGFNNPYALKTMRAHFPDIPLVVDAGIGVPSHAAAAMELGFDAVLINTAVAKAGDPAAMARAFALAVEAGRLAYEADPIEARDMASPSTPLLGKAFL</sequence>